<name>FLIA_SALTI</name>
<accession>P0A2E9</accession>
<accession>P17168</accession>
<accession>P74844</accession>
<gene>
    <name evidence="1" type="primary">fliA</name>
    <name type="ordered locus">STY2164</name>
    <name type="ordered locus">t0920</name>
</gene>
<reference key="1">
    <citation type="journal article" date="2001" name="Nature">
        <title>Complete genome sequence of a multiple drug resistant Salmonella enterica serovar Typhi CT18.</title>
        <authorList>
            <person name="Parkhill J."/>
            <person name="Dougan G."/>
            <person name="James K.D."/>
            <person name="Thomson N.R."/>
            <person name="Pickard D."/>
            <person name="Wain J."/>
            <person name="Churcher C.M."/>
            <person name="Mungall K.L."/>
            <person name="Bentley S.D."/>
            <person name="Holden M.T.G."/>
            <person name="Sebaihia M."/>
            <person name="Baker S."/>
            <person name="Basham D."/>
            <person name="Brooks K."/>
            <person name="Chillingworth T."/>
            <person name="Connerton P."/>
            <person name="Cronin A."/>
            <person name="Davis P."/>
            <person name="Davies R.M."/>
            <person name="Dowd L."/>
            <person name="White N."/>
            <person name="Farrar J."/>
            <person name="Feltwell T."/>
            <person name="Hamlin N."/>
            <person name="Haque A."/>
            <person name="Hien T.T."/>
            <person name="Holroyd S."/>
            <person name="Jagels K."/>
            <person name="Krogh A."/>
            <person name="Larsen T.S."/>
            <person name="Leather S."/>
            <person name="Moule S."/>
            <person name="O'Gaora P."/>
            <person name="Parry C."/>
            <person name="Quail M.A."/>
            <person name="Rutherford K.M."/>
            <person name="Simmonds M."/>
            <person name="Skelton J."/>
            <person name="Stevens K."/>
            <person name="Whitehead S."/>
            <person name="Barrell B.G."/>
        </authorList>
    </citation>
    <scope>NUCLEOTIDE SEQUENCE [LARGE SCALE GENOMIC DNA]</scope>
    <source>
        <strain>CT18</strain>
    </source>
</reference>
<reference key="2">
    <citation type="journal article" date="2003" name="J. Bacteriol.">
        <title>Comparative genomics of Salmonella enterica serovar Typhi strains Ty2 and CT18.</title>
        <authorList>
            <person name="Deng W."/>
            <person name="Liou S.-R."/>
            <person name="Plunkett G. III"/>
            <person name="Mayhew G.F."/>
            <person name="Rose D.J."/>
            <person name="Burland V."/>
            <person name="Kodoyianni V."/>
            <person name="Schwartz D.C."/>
            <person name="Blattner F.R."/>
        </authorList>
    </citation>
    <scope>NUCLEOTIDE SEQUENCE [LARGE SCALE GENOMIC DNA]</scope>
    <source>
        <strain>ATCC 700931 / Ty2</strain>
    </source>
</reference>
<keyword id="KW-0963">Cytoplasm</keyword>
<keyword id="KW-0238">DNA-binding</keyword>
<keyword id="KW-0731">Sigma factor</keyword>
<keyword id="KW-0804">Transcription</keyword>
<keyword id="KW-0805">Transcription regulation</keyword>
<keyword id="KW-0843">Virulence</keyword>
<feature type="chain" id="PRO_0000093984" description="RNA polymerase sigma factor FliA">
    <location>
        <begin position="1"/>
        <end position="239"/>
    </location>
</feature>
<feature type="DNA-binding region" description="H-T-H motif" evidence="1">
    <location>
        <begin position="207"/>
        <end position="226"/>
    </location>
</feature>
<feature type="region of interest" description="Sigma-70 factor domain-2" evidence="1">
    <location>
        <begin position="16"/>
        <end position="88"/>
    </location>
</feature>
<feature type="region of interest" description="Sigma-70 factor domain-3" evidence="1">
    <location>
        <begin position="96"/>
        <end position="166"/>
    </location>
</feature>
<feature type="region of interest" description="Sigma-70 factor domain-4" evidence="1">
    <location>
        <begin position="185"/>
        <end position="233"/>
    </location>
</feature>
<feature type="short sequence motif" description="Interaction with polymerase core subunit RpoC">
    <location>
        <begin position="43"/>
        <end position="46"/>
    </location>
</feature>
<protein>
    <recommendedName>
        <fullName evidence="1">RNA polymerase sigma factor FliA</fullName>
    </recommendedName>
    <alternativeName>
        <fullName evidence="1">RNA polymerase sigma factor for flagellar operon</fullName>
    </alternativeName>
    <alternativeName>
        <fullName evidence="1">Sigma F</fullName>
    </alternativeName>
    <alternativeName>
        <fullName evidence="1">Sigma-28</fullName>
    </alternativeName>
</protein>
<organism>
    <name type="scientific">Salmonella typhi</name>
    <dbReference type="NCBI Taxonomy" id="90370"/>
    <lineage>
        <taxon>Bacteria</taxon>
        <taxon>Pseudomonadati</taxon>
        <taxon>Pseudomonadota</taxon>
        <taxon>Gammaproteobacteria</taxon>
        <taxon>Enterobacterales</taxon>
        <taxon>Enterobacteriaceae</taxon>
        <taxon>Salmonella</taxon>
    </lineage>
</organism>
<evidence type="ECO:0000255" key="1">
    <source>
        <dbReference type="HAMAP-Rule" id="MF_00962"/>
    </source>
</evidence>
<dbReference type="EMBL" id="AL513382">
    <property type="protein sequence ID" value="CAD05705.1"/>
    <property type="molecule type" value="Genomic_DNA"/>
</dbReference>
<dbReference type="EMBL" id="AE014613">
    <property type="protein sequence ID" value="AAO68597.1"/>
    <property type="molecule type" value="Genomic_DNA"/>
</dbReference>
<dbReference type="RefSeq" id="NP_456519.1">
    <property type="nucleotide sequence ID" value="NC_003198.1"/>
</dbReference>
<dbReference type="RefSeq" id="WP_001087453.1">
    <property type="nucleotide sequence ID" value="NZ_WSUR01000004.1"/>
</dbReference>
<dbReference type="SMR" id="P0A2E9"/>
<dbReference type="STRING" id="220341.gene:17586073"/>
<dbReference type="KEGG" id="stt:t0920"/>
<dbReference type="KEGG" id="sty:STY2164"/>
<dbReference type="PATRIC" id="fig|220341.7.peg.2176"/>
<dbReference type="eggNOG" id="COG1191">
    <property type="taxonomic scope" value="Bacteria"/>
</dbReference>
<dbReference type="HOGENOM" id="CLU_014793_8_1_6"/>
<dbReference type="OMA" id="LMMENRM"/>
<dbReference type="OrthoDB" id="9799825at2"/>
<dbReference type="Proteomes" id="UP000000541">
    <property type="component" value="Chromosome"/>
</dbReference>
<dbReference type="Proteomes" id="UP000002670">
    <property type="component" value="Chromosome"/>
</dbReference>
<dbReference type="GO" id="GO:0005737">
    <property type="term" value="C:cytoplasm"/>
    <property type="evidence" value="ECO:0007669"/>
    <property type="project" value="UniProtKB-SubCell"/>
</dbReference>
<dbReference type="GO" id="GO:0003677">
    <property type="term" value="F:DNA binding"/>
    <property type="evidence" value="ECO:0007669"/>
    <property type="project" value="UniProtKB-UniRule"/>
</dbReference>
<dbReference type="GO" id="GO:0003899">
    <property type="term" value="F:DNA-directed RNA polymerase activity"/>
    <property type="evidence" value="ECO:0007669"/>
    <property type="project" value="InterPro"/>
</dbReference>
<dbReference type="GO" id="GO:0016987">
    <property type="term" value="F:sigma factor activity"/>
    <property type="evidence" value="ECO:0007669"/>
    <property type="project" value="UniProtKB-UniRule"/>
</dbReference>
<dbReference type="GO" id="GO:0006352">
    <property type="term" value="P:DNA-templated transcription initiation"/>
    <property type="evidence" value="ECO:0007669"/>
    <property type="project" value="UniProtKB-UniRule"/>
</dbReference>
<dbReference type="CDD" id="cd06171">
    <property type="entry name" value="Sigma70_r4"/>
    <property type="match status" value="1"/>
</dbReference>
<dbReference type="FunFam" id="1.10.1740.10:FF:000002">
    <property type="entry name" value="RNA polymerase sigma factor FliA"/>
    <property type="match status" value="1"/>
</dbReference>
<dbReference type="FunFam" id="1.20.140.160:FF:000001">
    <property type="entry name" value="RNA polymerase sigma factor FliA"/>
    <property type="match status" value="1"/>
</dbReference>
<dbReference type="Gene3D" id="1.10.1740.10">
    <property type="match status" value="1"/>
</dbReference>
<dbReference type="Gene3D" id="1.20.140.160">
    <property type="match status" value="1"/>
</dbReference>
<dbReference type="HAMAP" id="MF_00962">
    <property type="entry name" value="Sigma70_FliA"/>
    <property type="match status" value="1"/>
</dbReference>
<dbReference type="InterPro" id="IPR014284">
    <property type="entry name" value="RNA_pol_sigma-70_dom"/>
</dbReference>
<dbReference type="InterPro" id="IPR000943">
    <property type="entry name" value="RNA_pol_sigma70"/>
</dbReference>
<dbReference type="InterPro" id="IPR007627">
    <property type="entry name" value="RNA_pol_sigma70_r2"/>
</dbReference>
<dbReference type="InterPro" id="IPR007624">
    <property type="entry name" value="RNA_pol_sigma70_r3"/>
</dbReference>
<dbReference type="InterPro" id="IPR007630">
    <property type="entry name" value="RNA_pol_sigma70_r4"/>
</dbReference>
<dbReference type="InterPro" id="IPR012845">
    <property type="entry name" value="RNA_pol_sigma_FliA_WhiG"/>
</dbReference>
<dbReference type="InterPro" id="IPR013325">
    <property type="entry name" value="RNA_pol_sigma_r2"/>
</dbReference>
<dbReference type="InterPro" id="IPR013324">
    <property type="entry name" value="RNA_pol_sigma_r3/r4-like"/>
</dbReference>
<dbReference type="InterPro" id="IPR028617">
    <property type="entry name" value="Sigma70_FliA"/>
</dbReference>
<dbReference type="NCBIfam" id="TIGR02479">
    <property type="entry name" value="FliA_WhiG"/>
    <property type="match status" value="1"/>
</dbReference>
<dbReference type="NCBIfam" id="NF005413">
    <property type="entry name" value="PRK06986.1"/>
    <property type="match status" value="1"/>
</dbReference>
<dbReference type="NCBIfam" id="TIGR02937">
    <property type="entry name" value="sigma70-ECF"/>
    <property type="match status" value="1"/>
</dbReference>
<dbReference type="PANTHER" id="PTHR30385:SF7">
    <property type="entry name" value="RNA POLYMERASE SIGMA FACTOR FLIA"/>
    <property type="match status" value="1"/>
</dbReference>
<dbReference type="PANTHER" id="PTHR30385">
    <property type="entry name" value="SIGMA FACTOR F FLAGELLAR"/>
    <property type="match status" value="1"/>
</dbReference>
<dbReference type="Pfam" id="PF04542">
    <property type="entry name" value="Sigma70_r2"/>
    <property type="match status" value="1"/>
</dbReference>
<dbReference type="Pfam" id="PF04539">
    <property type="entry name" value="Sigma70_r3"/>
    <property type="match status" value="1"/>
</dbReference>
<dbReference type="Pfam" id="PF04545">
    <property type="entry name" value="Sigma70_r4"/>
    <property type="match status" value="1"/>
</dbReference>
<dbReference type="PIRSF" id="PIRSF000770">
    <property type="entry name" value="RNA_pol_sigma-SigE/K"/>
    <property type="match status" value="1"/>
</dbReference>
<dbReference type="PRINTS" id="PR00046">
    <property type="entry name" value="SIGMA70FCT"/>
</dbReference>
<dbReference type="SUPFAM" id="SSF88946">
    <property type="entry name" value="Sigma2 domain of RNA polymerase sigma factors"/>
    <property type="match status" value="1"/>
</dbReference>
<dbReference type="SUPFAM" id="SSF88659">
    <property type="entry name" value="Sigma3 and sigma4 domains of RNA polymerase sigma factors"/>
    <property type="match status" value="2"/>
</dbReference>
<dbReference type="PROSITE" id="PS00715">
    <property type="entry name" value="SIGMA70_1"/>
    <property type="match status" value="1"/>
</dbReference>
<dbReference type="PROSITE" id="PS00716">
    <property type="entry name" value="SIGMA70_2"/>
    <property type="match status" value="1"/>
</dbReference>
<sequence>MNSLYTAEGVMDKHSLWQRYVPLVRHEALRLQVRLPASVELDDLLQAGGIGLLNAVDRYDALQGTAFTTYAVQRIRGAMLDELRSRDWVPRSVRRNAREVAQAMGQLEQELGRNATETEVAERLGIPVAEYRQMLLDTNNSQLFSYDEWREEHGDSIELVTEEHQQENPLHQLLEGDLRQRVMDAIESLPEREQLVLTLYYQEELNLKEIGAVLEVGESRVSQLHSQAIKRLRTKLGKL</sequence>
<comment type="function">
    <text evidence="1">Sigma factors are initiation factors that promote the attachment of RNA polymerase to specific initiation sites and are then released. This sigma factor controls the expression of flagella-related genes.</text>
</comment>
<comment type="subcellular location">
    <subcellularLocation>
        <location evidence="1">Cytoplasm</location>
    </subcellularLocation>
</comment>
<comment type="similarity">
    <text evidence="1">Belongs to the sigma-70 factor family. FliA subfamily.</text>
</comment>
<proteinExistence type="inferred from homology"/>